<reference key="1">
    <citation type="journal article" date="2000" name="Genome">
        <title>Gene content and organization of a 281-kbp contig from the genome of the extremely thermophilic archaeon, Sulfolobus solfataricus P2.</title>
        <authorList>
            <person name="Charlebois R.L."/>
            <person name="Singh R.K."/>
            <person name="Chan-Weiher C.C.-Y."/>
            <person name="Allard G."/>
            <person name="Chow C."/>
            <person name="Confalonieri F."/>
            <person name="Curtis B."/>
            <person name="Duguet M."/>
            <person name="Erauso G."/>
            <person name="Faguy D."/>
            <person name="Gaasterland T."/>
            <person name="Garrett R.A."/>
            <person name="Gordon P."/>
            <person name="Jeffries A.C."/>
            <person name="Kozera C."/>
            <person name="Kushwaha N."/>
            <person name="Lafleur E."/>
            <person name="Medina N."/>
            <person name="Peng X."/>
            <person name="Penny S.L."/>
            <person name="She Q."/>
            <person name="St Jean A."/>
            <person name="van der Oost J."/>
            <person name="Young F."/>
            <person name="Zivanovic Y."/>
            <person name="Doolittle W.F."/>
            <person name="Ragan M.A."/>
            <person name="Sensen C.W."/>
        </authorList>
    </citation>
    <scope>NUCLEOTIDE SEQUENCE [LARGE SCALE GENOMIC DNA]</scope>
    <source>
        <strain>ATCC 35092 / DSM 1617 / JCM 11322 / P2</strain>
    </source>
</reference>
<reference key="2">
    <citation type="journal article" date="2001" name="Proc. Natl. Acad. Sci. U.S.A.">
        <title>The complete genome of the crenarchaeon Sulfolobus solfataricus P2.</title>
        <authorList>
            <person name="She Q."/>
            <person name="Singh R.K."/>
            <person name="Confalonieri F."/>
            <person name="Zivanovic Y."/>
            <person name="Allard G."/>
            <person name="Awayez M.J."/>
            <person name="Chan-Weiher C.C.-Y."/>
            <person name="Clausen I.G."/>
            <person name="Curtis B.A."/>
            <person name="De Moors A."/>
            <person name="Erauso G."/>
            <person name="Fletcher C."/>
            <person name="Gordon P.M.K."/>
            <person name="Heikamp-de Jong I."/>
            <person name="Jeffries A.C."/>
            <person name="Kozera C.J."/>
            <person name="Medina N."/>
            <person name="Peng X."/>
            <person name="Thi-Ngoc H.P."/>
            <person name="Redder P."/>
            <person name="Schenk M.E."/>
            <person name="Theriault C."/>
            <person name="Tolstrup N."/>
            <person name="Charlebois R.L."/>
            <person name="Doolittle W.F."/>
            <person name="Duguet M."/>
            <person name="Gaasterland T."/>
            <person name="Garrett R.A."/>
            <person name="Ragan M.A."/>
            <person name="Sensen C.W."/>
            <person name="Van der Oost J."/>
        </authorList>
    </citation>
    <scope>NUCLEOTIDE SEQUENCE [LARGE SCALE GENOMIC DNA]</scope>
    <source>
        <strain>ATCC 35092 / DSM 1617 / JCM 11322 / P2</strain>
    </source>
</reference>
<protein>
    <recommendedName>
        <fullName evidence="1">Small ribosomal subunit protein uS8</fullName>
    </recommendedName>
    <alternativeName>
        <fullName evidence="2">30S ribosomal protein S8</fullName>
    </alternativeName>
</protein>
<proteinExistence type="evidence at protein level"/>
<accession>Q9UX92</accession>
<gene>
    <name evidence="1" type="primary">rps8</name>
    <name evidence="1" type="synonym">rps8Ab</name>
    <name type="ordered locus">SSO0703</name>
    <name type="ORF">C10_027</name>
</gene>
<comment type="function">
    <text evidence="1">One of the primary rRNA binding proteins, it binds directly to 16S rRNA central domain where it helps coordinate assembly of the platform of the 30S subunit.</text>
</comment>
<comment type="subunit">
    <text evidence="1">Part of the 30S ribosomal subunit.</text>
</comment>
<comment type="similarity">
    <text evidence="1">Belongs to the universal ribosomal protein uS8 family.</text>
</comment>
<evidence type="ECO:0000255" key="1">
    <source>
        <dbReference type="HAMAP-Rule" id="MF_01302"/>
    </source>
</evidence>
<evidence type="ECO:0000305" key="2"/>
<organism>
    <name type="scientific">Saccharolobus solfataricus (strain ATCC 35092 / DSM 1617 / JCM 11322 / P2)</name>
    <name type="common">Sulfolobus solfataricus</name>
    <dbReference type="NCBI Taxonomy" id="273057"/>
    <lineage>
        <taxon>Archaea</taxon>
        <taxon>Thermoproteota</taxon>
        <taxon>Thermoprotei</taxon>
        <taxon>Sulfolobales</taxon>
        <taxon>Sulfolobaceae</taxon>
        <taxon>Saccharolobus</taxon>
    </lineage>
</organism>
<feature type="chain" id="PRO_0000126553" description="Small ribosomal subunit protein uS8">
    <location>
        <begin position="1"/>
        <end position="133"/>
    </location>
</feature>
<keyword id="KW-0002">3D-structure</keyword>
<keyword id="KW-1185">Reference proteome</keyword>
<keyword id="KW-0687">Ribonucleoprotein</keyword>
<keyword id="KW-0689">Ribosomal protein</keyword>
<keyword id="KW-0694">RNA-binding</keyword>
<keyword id="KW-0699">rRNA-binding</keyword>
<name>RS8_SACS2</name>
<sequence>MVFVNPLANALTSIYNNEMRRNKQAIIMPASKLVINVLRVMQKEGYVGEFEYIDDGRWGKITVQLLGRVNKCGPITPRYPLSYRQMIALPDYVRRYLPSKEIGIIIVSTSKGVMSHKEAARLRIGGVALGYVY</sequence>
<dbReference type="EMBL" id="Y18930">
    <property type="protein sequence ID" value="CAB57600.1"/>
    <property type="molecule type" value="Genomic_DNA"/>
</dbReference>
<dbReference type="EMBL" id="AE006641">
    <property type="protein sequence ID" value="AAK41004.1"/>
    <property type="molecule type" value="Genomic_DNA"/>
</dbReference>
<dbReference type="PIR" id="E90218">
    <property type="entry name" value="E90218"/>
</dbReference>
<dbReference type="RefSeq" id="WP_009991261.1">
    <property type="nucleotide sequence ID" value="NC_002754.1"/>
</dbReference>
<dbReference type="PDB" id="9FHL">
    <property type="method" value="EM"/>
    <property type="resolution" value="2.50 A"/>
    <property type="chains" value="I=1-133"/>
</dbReference>
<dbReference type="PDB" id="9FRA">
    <property type="method" value="EM"/>
    <property type="resolution" value="2.80 A"/>
    <property type="chains" value="I=1-133"/>
</dbReference>
<dbReference type="PDB" id="9FRK">
    <property type="method" value="EM"/>
    <property type="resolution" value="3.00 A"/>
    <property type="chains" value="I=1-133"/>
</dbReference>
<dbReference type="PDB" id="9FRL">
    <property type="method" value="EM"/>
    <property type="resolution" value="2.97 A"/>
    <property type="chains" value="I=1-133"/>
</dbReference>
<dbReference type="PDB" id="9FS6">
    <property type="method" value="EM"/>
    <property type="resolution" value="2.90 A"/>
    <property type="chains" value="I=1-133"/>
</dbReference>
<dbReference type="PDB" id="9FS8">
    <property type="method" value="EM"/>
    <property type="resolution" value="3.70 A"/>
    <property type="chains" value="I=1-133"/>
</dbReference>
<dbReference type="PDB" id="9FSF">
    <property type="method" value="EM"/>
    <property type="resolution" value="2.80 A"/>
    <property type="chains" value="I=1-133"/>
</dbReference>
<dbReference type="PDB" id="9FY0">
    <property type="method" value="EM"/>
    <property type="resolution" value="2.90 A"/>
    <property type="chains" value="I=1-133"/>
</dbReference>
<dbReference type="PDBsum" id="9FHL"/>
<dbReference type="PDBsum" id="9FRA"/>
<dbReference type="PDBsum" id="9FRK"/>
<dbReference type="PDBsum" id="9FRL"/>
<dbReference type="PDBsum" id="9FS6"/>
<dbReference type="PDBsum" id="9FS8"/>
<dbReference type="PDBsum" id="9FSF"/>
<dbReference type="PDBsum" id="9FY0"/>
<dbReference type="EMDB" id="EMD-50445"/>
<dbReference type="EMDB" id="EMD-50709"/>
<dbReference type="EMDB" id="EMD-50716"/>
<dbReference type="EMDB" id="EMD-50717"/>
<dbReference type="EMDB" id="EMD-50724"/>
<dbReference type="EMDB" id="EMD-50725"/>
<dbReference type="EMDB" id="EMD-50727"/>
<dbReference type="EMDB" id="EMD-50854"/>
<dbReference type="SMR" id="Q9UX92"/>
<dbReference type="FunCoup" id="Q9UX92">
    <property type="interactions" value="209"/>
</dbReference>
<dbReference type="STRING" id="273057.SSO0703"/>
<dbReference type="PaxDb" id="273057-SSO0703"/>
<dbReference type="EnsemblBacteria" id="AAK41004">
    <property type="protein sequence ID" value="AAK41004"/>
    <property type="gene ID" value="SSO0703"/>
</dbReference>
<dbReference type="KEGG" id="sso:SSO0703"/>
<dbReference type="PATRIC" id="fig|273057.12.peg.703"/>
<dbReference type="eggNOG" id="arCOG04091">
    <property type="taxonomic scope" value="Archaea"/>
</dbReference>
<dbReference type="HOGENOM" id="CLU_098428_1_1_2"/>
<dbReference type="InParanoid" id="Q9UX92"/>
<dbReference type="PhylomeDB" id="Q9UX92"/>
<dbReference type="Proteomes" id="UP000001974">
    <property type="component" value="Chromosome"/>
</dbReference>
<dbReference type="GO" id="GO:0022627">
    <property type="term" value="C:cytosolic small ribosomal subunit"/>
    <property type="evidence" value="ECO:0000318"/>
    <property type="project" value="GO_Central"/>
</dbReference>
<dbReference type="GO" id="GO:0019843">
    <property type="term" value="F:rRNA binding"/>
    <property type="evidence" value="ECO:0007669"/>
    <property type="project" value="UniProtKB-UniRule"/>
</dbReference>
<dbReference type="GO" id="GO:0003735">
    <property type="term" value="F:structural constituent of ribosome"/>
    <property type="evidence" value="ECO:0000318"/>
    <property type="project" value="GO_Central"/>
</dbReference>
<dbReference type="GO" id="GO:0006412">
    <property type="term" value="P:translation"/>
    <property type="evidence" value="ECO:0007669"/>
    <property type="project" value="UniProtKB-UniRule"/>
</dbReference>
<dbReference type="FunFam" id="3.30.1370.30:FF:000001">
    <property type="entry name" value="40S ribosomal protein S15a"/>
    <property type="match status" value="1"/>
</dbReference>
<dbReference type="Gene3D" id="3.30.1370.30">
    <property type="match status" value="1"/>
</dbReference>
<dbReference type="Gene3D" id="3.30.1490.10">
    <property type="match status" value="1"/>
</dbReference>
<dbReference type="HAMAP" id="MF_01302_A">
    <property type="entry name" value="Ribosomal_uS8_A"/>
    <property type="match status" value="1"/>
</dbReference>
<dbReference type="InterPro" id="IPR000630">
    <property type="entry name" value="Ribosomal_uS8"/>
</dbReference>
<dbReference type="InterPro" id="IPR047863">
    <property type="entry name" value="Ribosomal_uS8_CS"/>
</dbReference>
<dbReference type="InterPro" id="IPR035987">
    <property type="entry name" value="Ribosomal_uS8_sf"/>
</dbReference>
<dbReference type="NCBIfam" id="NF003115">
    <property type="entry name" value="PRK04034.1"/>
    <property type="match status" value="1"/>
</dbReference>
<dbReference type="PANTHER" id="PTHR11758">
    <property type="entry name" value="40S RIBOSOMAL PROTEIN S15A"/>
    <property type="match status" value="1"/>
</dbReference>
<dbReference type="Pfam" id="PF00410">
    <property type="entry name" value="Ribosomal_S8"/>
    <property type="match status" value="1"/>
</dbReference>
<dbReference type="SUPFAM" id="SSF56047">
    <property type="entry name" value="Ribosomal protein S8"/>
    <property type="match status" value="1"/>
</dbReference>
<dbReference type="PROSITE" id="PS00053">
    <property type="entry name" value="RIBOSOMAL_S8"/>
    <property type="match status" value="1"/>
</dbReference>